<protein>
    <recommendedName>
        <fullName evidence="14">Alpha,alpha-trehalose-phosphate synthase [UDP-forming] 1</fullName>
        <ecNumber evidence="2">2.4.1.15</ecNumber>
    </recommendedName>
    <alternativeName>
        <fullName evidence="13">Trehalose-6-phosphate synthase 1</fullName>
        <shortName evidence="13">AtTPS1</shortName>
    </alternativeName>
</protein>
<evidence type="ECO:0000256" key="1">
    <source>
        <dbReference type="SAM" id="MobiDB-lite"/>
    </source>
</evidence>
<evidence type="ECO:0000269" key="2">
    <source>
    </source>
</evidence>
<evidence type="ECO:0000269" key="3">
    <source>
    </source>
</evidence>
<evidence type="ECO:0000269" key="4">
    <source>
    </source>
</evidence>
<evidence type="ECO:0000269" key="5">
    <source>
    </source>
</evidence>
<evidence type="ECO:0000269" key="6">
    <source>
    </source>
</evidence>
<evidence type="ECO:0000269" key="7">
    <source>
    </source>
</evidence>
<evidence type="ECO:0000269" key="8">
    <source>
    </source>
</evidence>
<evidence type="ECO:0000269" key="9">
    <source>
    </source>
</evidence>
<evidence type="ECO:0000269" key="10">
    <source>
    </source>
</evidence>
<evidence type="ECO:0000269" key="11">
    <source>
    </source>
</evidence>
<evidence type="ECO:0000269" key="12">
    <source>
    </source>
</evidence>
<evidence type="ECO:0000303" key="13">
    <source>
    </source>
</evidence>
<evidence type="ECO:0000305" key="14"/>
<evidence type="ECO:0000312" key="15">
    <source>
        <dbReference type="Araport" id="AT1G78580"/>
    </source>
</evidence>
<evidence type="ECO:0000312" key="16">
    <source>
        <dbReference type="EMBL" id="AAD30578.1"/>
    </source>
</evidence>
<dbReference type="EC" id="2.4.1.15" evidence="2"/>
<dbReference type="EMBL" id="Y08568">
    <property type="protein sequence ID" value="CAA69879.1"/>
    <property type="molecule type" value="mRNA"/>
</dbReference>
<dbReference type="EMBL" id="AC007260">
    <property type="protein sequence ID" value="AAD30578.1"/>
    <property type="molecule type" value="Genomic_DNA"/>
</dbReference>
<dbReference type="EMBL" id="CP002684">
    <property type="protein sequence ID" value="AEE36123.1"/>
    <property type="molecule type" value="Genomic_DNA"/>
</dbReference>
<dbReference type="EMBL" id="CP002684">
    <property type="protein sequence ID" value="ANM60660.1"/>
    <property type="molecule type" value="Genomic_DNA"/>
</dbReference>
<dbReference type="EMBL" id="CP002684">
    <property type="protein sequence ID" value="ANM60661.1"/>
    <property type="molecule type" value="Genomic_DNA"/>
</dbReference>
<dbReference type="EMBL" id="CP002684">
    <property type="protein sequence ID" value="ANM60662.1"/>
    <property type="molecule type" value="Genomic_DNA"/>
</dbReference>
<dbReference type="EMBL" id="AF370287">
    <property type="protein sequence ID" value="AAK44102.2"/>
    <property type="molecule type" value="mRNA"/>
</dbReference>
<dbReference type="PIR" id="D96814">
    <property type="entry name" value="D96814"/>
</dbReference>
<dbReference type="RefSeq" id="NP_001319403.1">
    <property type="nucleotide sequence ID" value="NM_001334832.1"/>
</dbReference>
<dbReference type="RefSeq" id="NP_001322931.1">
    <property type="nucleotide sequence ID" value="NM_001334833.1"/>
</dbReference>
<dbReference type="RefSeq" id="NP_001322932.1">
    <property type="nucleotide sequence ID" value="NM_001334834.1"/>
</dbReference>
<dbReference type="RefSeq" id="NP_177979.1">
    <property type="nucleotide sequence ID" value="NM_106505.5"/>
</dbReference>
<dbReference type="SMR" id="Q9SYM4"/>
<dbReference type="FunCoup" id="Q9SYM4">
    <property type="interactions" value="992"/>
</dbReference>
<dbReference type="STRING" id="3702.Q9SYM4"/>
<dbReference type="CAZy" id="GT20">
    <property type="family name" value="Glycosyltransferase Family 20"/>
</dbReference>
<dbReference type="iPTMnet" id="Q9SYM4"/>
<dbReference type="PaxDb" id="3702-AT1G78580.1"/>
<dbReference type="ProteomicsDB" id="232494"/>
<dbReference type="EnsemblPlants" id="AT1G78580.1">
    <property type="protein sequence ID" value="AT1G78580.1"/>
    <property type="gene ID" value="AT1G78580"/>
</dbReference>
<dbReference type="EnsemblPlants" id="AT1G78580.2">
    <property type="protein sequence ID" value="AT1G78580.2"/>
    <property type="gene ID" value="AT1G78580"/>
</dbReference>
<dbReference type="EnsemblPlants" id="AT1G78580.3">
    <property type="protein sequence ID" value="AT1G78580.3"/>
    <property type="gene ID" value="AT1G78580"/>
</dbReference>
<dbReference type="EnsemblPlants" id="AT1G78580.4">
    <property type="protein sequence ID" value="AT1G78580.4"/>
    <property type="gene ID" value="AT1G78580"/>
</dbReference>
<dbReference type="GeneID" id="844194"/>
<dbReference type="Gramene" id="AT1G78580.1">
    <property type="protein sequence ID" value="AT1G78580.1"/>
    <property type="gene ID" value="AT1G78580"/>
</dbReference>
<dbReference type="Gramene" id="AT1G78580.2">
    <property type="protein sequence ID" value="AT1G78580.2"/>
    <property type="gene ID" value="AT1G78580"/>
</dbReference>
<dbReference type="Gramene" id="AT1G78580.3">
    <property type="protein sequence ID" value="AT1G78580.3"/>
    <property type="gene ID" value="AT1G78580"/>
</dbReference>
<dbReference type="Gramene" id="AT1G78580.4">
    <property type="protein sequence ID" value="AT1G78580.4"/>
    <property type="gene ID" value="AT1G78580"/>
</dbReference>
<dbReference type="KEGG" id="ath:AT1G78580"/>
<dbReference type="Araport" id="AT1G78580"/>
<dbReference type="TAIR" id="AT1G78580">
    <property type="gene designation" value="TPS1"/>
</dbReference>
<dbReference type="eggNOG" id="KOG1050">
    <property type="taxonomic scope" value="Eukaryota"/>
</dbReference>
<dbReference type="HOGENOM" id="CLU_002351_0_1_1"/>
<dbReference type="InParanoid" id="Q9SYM4"/>
<dbReference type="OMA" id="QTEAHYY"/>
<dbReference type="PhylomeDB" id="Q9SYM4"/>
<dbReference type="BRENDA" id="2.4.1.15">
    <property type="organism ID" value="399"/>
</dbReference>
<dbReference type="PRO" id="PR:Q9SYM4"/>
<dbReference type="Proteomes" id="UP000006548">
    <property type="component" value="Chromosome 1"/>
</dbReference>
<dbReference type="ExpressionAtlas" id="Q9SYM4">
    <property type="expression patterns" value="baseline and differential"/>
</dbReference>
<dbReference type="GO" id="GO:0005576">
    <property type="term" value="C:extracellular region"/>
    <property type="evidence" value="ECO:0007669"/>
    <property type="project" value="UniProtKB-KW"/>
</dbReference>
<dbReference type="GO" id="GO:0005634">
    <property type="term" value="C:nucleus"/>
    <property type="evidence" value="ECO:0000314"/>
    <property type="project" value="TAIR"/>
</dbReference>
<dbReference type="GO" id="GO:0005773">
    <property type="term" value="C:vacuole"/>
    <property type="evidence" value="ECO:0007669"/>
    <property type="project" value="UniProtKB-SubCell"/>
</dbReference>
<dbReference type="GO" id="GO:0003825">
    <property type="term" value="F:alpha,alpha-trehalose-phosphate synthase (UDP-forming) activity"/>
    <property type="evidence" value="ECO:0000316"/>
    <property type="project" value="TAIR"/>
</dbReference>
<dbReference type="GO" id="GO:0051301">
    <property type="term" value="P:cell division"/>
    <property type="evidence" value="ECO:0000315"/>
    <property type="project" value="TAIR"/>
</dbReference>
<dbReference type="GO" id="GO:0080186">
    <property type="term" value="P:developmental vegetative growth"/>
    <property type="evidence" value="ECO:0000315"/>
    <property type="project" value="TAIR"/>
</dbReference>
<dbReference type="GO" id="GO:0009793">
    <property type="term" value="P:embryo development ending in seed dormancy"/>
    <property type="evidence" value="ECO:0000315"/>
    <property type="project" value="TAIR"/>
</dbReference>
<dbReference type="GO" id="GO:0048574">
    <property type="term" value="P:long-day photoperiodism, flowering"/>
    <property type="evidence" value="ECO:0000315"/>
    <property type="project" value="TAIR"/>
</dbReference>
<dbReference type="GO" id="GO:0009832">
    <property type="term" value="P:plant-type cell wall biogenesis"/>
    <property type="evidence" value="ECO:0000315"/>
    <property type="project" value="TAIR"/>
</dbReference>
<dbReference type="GO" id="GO:0048364">
    <property type="term" value="P:root development"/>
    <property type="evidence" value="ECO:0000315"/>
    <property type="project" value="TAIR"/>
</dbReference>
<dbReference type="GO" id="GO:0010182">
    <property type="term" value="P:sugar mediated signaling pathway"/>
    <property type="evidence" value="ECO:0000315"/>
    <property type="project" value="TAIR"/>
</dbReference>
<dbReference type="GO" id="GO:0005992">
    <property type="term" value="P:trehalose biosynthetic process"/>
    <property type="evidence" value="ECO:0007669"/>
    <property type="project" value="InterPro"/>
</dbReference>
<dbReference type="GO" id="GO:0005991">
    <property type="term" value="P:trehalose metabolic process"/>
    <property type="evidence" value="ECO:0000304"/>
    <property type="project" value="TAIR"/>
</dbReference>
<dbReference type="CDD" id="cd03788">
    <property type="entry name" value="GT20_TPS"/>
    <property type="match status" value="1"/>
</dbReference>
<dbReference type="CDD" id="cd01627">
    <property type="entry name" value="HAD_TPP"/>
    <property type="match status" value="1"/>
</dbReference>
<dbReference type="FunFam" id="3.40.50.1000:FF:000100">
    <property type="entry name" value="Alpha,alpha-trehalose-phosphate synthase"/>
    <property type="match status" value="1"/>
</dbReference>
<dbReference type="FunFam" id="3.40.50.2000:FF:000046">
    <property type="entry name" value="alpha,alpha-trehalose-phosphate synthase [UDP-forming] 1"/>
    <property type="match status" value="1"/>
</dbReference>
<dbReference type="FunFam" id="3.40.50.2000:FF:000039">
    <property type="entry name" value="alpha,alpha-trehalose-phosphate synthase [UDP-forming] 1-like"/>
    <property type="match status" value="1"/>
</dbReference>
<dbReference type="FunFam" id="3.40.50.1000:FF:000351">
    <property type="entry name" value="Trehalose-6-phosphatase synthase S4"/>
    <property type="match status" value="1"/>
</dbReference>
<dbReference type="Gene3D" id="3.40.50.2000">
    <property type="entry name" value="Glycogen Phosphorylase B"/>
    <property type="match status" value="2"/>
</dbReference>
<dbReference type="InterPro" id="IPR001830">
    <property type="entry name" value="Glyco_trans_20"/>
</dbReference>
<dbReference type="InterPro" id="IPR036412">
    <property type="entry name" value="HAD-like_sf"/>
</dbReference>
<dbReference type="InterPro" id="IPR012766">
    <property type="entry name" value="Trehalose_OtsA"/>
</dbReference>
<dbReference type="InterPro" id="IPR003337">
    <property type="entry name" value="Trehalose_PPase"/>
</dbReference>
<dbReference type="NCBIfam" id="NF011071">
    <property type="entry name" value="PRK14501.1"/>
    <property type="match status" value="1"/>
</dbReference>
<dbReference type="NCBIfam" id="TIGR02400">
    <property type="entry name" value="trehalose_OtsA"/>
    <property type="match status" value="1"/>
</dbReference>
<dbReference type="PANTHER" id="PTHR10788:SF130">
    <property type="entry name" value="ALPHA,ALPHA-TREHALOSE-PHOSPHATE SYNTHASE [UDP-FORMING] 1"/>
    <property type="match status" value="1"/>
</dbReference>
<dbReference type="PANTHER" id="PTHR10788">
    <property type="entry name" value="TREHALOSE-6-PHOSPHATE SYNTHASE"/>
    <property type="match status" value="1"/>
</dbReference>
<dbReference type="Pfam" id="PF00982">
    <property type="entry name" value="Glyco_transf_20"/>
    <property type="match status" value="1"/>
</dbReference>
<dbReference type="Pfam" id="PF02358">
    <property type="entry name" value="Trehalose_PPase"/>
    <property type="match status" value="1"/>
</dbReference>
<dbReference type="SUPFAM" id="SSF56784">
    <property type="entry name" value="HAD-like"/>
    <property type="match status" value="1"/>
</dbReference>
<dbReference type="SUPFAM" id="SSF53756">
    <property type="entry name" value="UDP-Glycosyltransferase/glycogen phosphorylase"/>
    <property type="match status" value="1"/>
</dbReference>
<accession>Q9SYM4</accession>
<accession>P93653</accession>
<accession>Q94K55</accession>
<gene>
    <name evidence="13" type="primary">TPS1</name>
    <name evidence="15" type="ordered locus">At1g78580</name>
    <name evidence="16" type="ORF">T30F21.9</name>
</gene>
<sequence>MPGNKYNCSSSHIPLSRTERLLRDRELREKRKSNRARNPNDVAGSSENSENDLRLEGDSSRQYVEQYLEGAAAAMAHDDACERQEVRPYNRQRLLVVANRLPVSAVRRGEDSWSLEISAGGLVSALLGVKEFEARWIGWAGVNVPDEVGQKALSKALAEKRCIPVFLDEEIVHQYYNGYCNNILWPLFHYLGLPQEDRLATTRSFQSQFAAYKKANQMFADVVNEHYEEGDVVWCHDYHLMFLPKCLKEYNSKMKVGWFLHTPFPSSEIHRTLPSRSELLRSVLAADLVGFHTYDYARHFVSACTRILGLEGTPEGVEDQGRLTRVAAFPIGIDSDRFIRALEVPEVIQHMKELKERFAGRKVMLGVDRLDMIKGIPQKILAFEKFLEENANWRDKVVLLQIAVPTRTDVPEYQKLTSQVHEIVGRINGRFGTLTAVPIHHLDRSLDFHALCALYAVTDVALVTSLRDGMNLVSYEFVACQEAKKGVLILSEFAGAAQSLGAGAILVNPWNITEVAASIGQALNMTAEEREKRHRHNFHHVKTHTAQEWAETFVSELNDTVIEAQLRISKVPPELPQHDAIQRYSKSNNRLLILGFNATLTEPVDNQGRRGDQIKEMDLNLHPELKGPLKALCSDPSTTIVVLSGSSRSVLDKNFGEYDMWLAAENGMFLRLTNGEWMTTMPEHLNMEWVDSVKHVFKYFTERTPRSHFETRDTSLIWNYKYADIEFGRLQARDLLQHLWTGPISNASVDVVQGSRSVEVRAVGVTKGAAIDRILGEIVHSKSMTTPIDYVLCIGHFLGKDEDVYTFFEPELPSDMPAIARSRPSSDSGAKSSSGDRRPPSKSTHNNNKSGSKSSSSSNSNNNNKSSQRSLQSERKSGSNHSLGNSRRPSPEKISWNVLDLKGENYFSCAVGRTRTNARYLLGSPDDVVCFLEKLADTTSSP</sequence>
<reference key="1">
    <citation type="journal article" date="1998" name="Plant J.">
        <title>Isolation and molecular characterization of the Arabidopsis TPS1 gene, encoding trehalose-6-phosphate synthase.</title>
        <authorList>
            <person name="Blazquez M.A."/>
            <person name="Santos E."/>
            <person name="Flores C.L."/>
            <person name="Martinez-Zapater J.M."/>
            <person name="Salinas J."/>
            <person name="Gancedo C."/>
        </authorList>
    </citation>
    <scope>NUCLEOTIDE SEQUENCE [MRNA]</scope>
    <scope>FUNCTION</scope>
    <scope>TISSUE SPECIFICITY</scope>
</reference>
<reference key="2">
    <citation type="journal article" date="2000" name="Nature">
        <title>Sequence and analysis of chromosome 1 of the plant Arabidopsis thaliana.</title>
        <authorList>
            <person name="Theologis A."/>
            <person name="Ecker J.R."/>
            <person name="Palm C.J."/>
            <person name="Federspiel N.A."/>
            <person name="Kaul S."/>
            <person name="White O."/>
            <person name="Alonso J."/>
            <person name="Altafi H."/>
            <person name="Araujo R."/>
            <person name="Bowman C.L."/>
            <person name="Brooks S.Y."/>
            <person name="Buehler E."/>
            <person name="Chan A."/>
            <person name="Chao Q."/>
            <person name="Chen H."/>
            <person name="Cheuk R.F."/>
            <person name="Chin C.W."/>
            <person name="Chung M.K."/>
            <person name="Conn L."/>
            <person name="Conway A.B."/>
            <person name="Conway A.R."/>
            <person name="Creasy T.H."/>
            <person name="Dewar K."/>
            <person name="Dunn P."/>
            <person name="Etgu P."/>
            <person name="Feldblyum T.V."/>
            <person name="Feng J.-D."/>
            <person name="Fong B."/>
            <person name="Fujii C.Y."/>
            <person name="Gill J.E."/>
            <person name="Goldsmith A.D."/>
            <person name="Haas B."/>
            <person name="Hansen N.F."/>
            <person name="Hughes B."/>
            <person name="Huizar L."/>
            <person name="Hunter J.L."/>
            <person name="Jenkins J."/>
            <person name="Johnson-Hopson C."/>
            <person name="Khan S."/>
            <person name="Khaykin E."/>
            <person name="Kim C.J."/>
            <person name="Koo H.L."/>
            <person name="Kremenetskaia I."/>
            <person name="Kurtz D.B."/>
            <person name="Kwan A."/>
            <person name="Lam B."/>
            <person name="Langin-Hooper S."/>
            <person name="Lee A."/>
            <person name="Lee J.M."/>
            <person name="Lenz C.A."/>
            <person name="Li J.H."/>
            <person name="Li Y.-P."/>
            <person name="Lin X."/>
            <person name="Liu S.X."/>
            <person name="Liu Z.A."/>
            <person name="Luros J.S."/>
            <person name="Maiti R."/>
            <person name="Marziali A."/>
            <person name="Militscher J."/>
            <person name="Miranda M."/>
            <person name="Nguyen M."/>
            <person name="Nierman W.C."/>
            <person name="Osborne B.I."/>
            <person name="Pai G."/>
            <person name="Peterson J."/>
            <person name="Pham P.K."/>
            <person name="Rizzo M."/>
            <person name="Rooney T."/>
            <person name="Rowley D."/>
            <person name="Sakano H."/>
            <person name="Salzberg S.L."/>
            <person name="Schwartz J.R."/>
            <person name="Shinn P."/>
            <person name="Southwick A.M."/>
            <person name="Sun H."/>
            <person name="Tallon L.J."/>
            <person name="Tambunga G."/>
            <person name="Toriumi M.J."/>
            <person name="Town C.D."/>
            <person name="Utterback T."/>
            <person name="Van Aken S."/>
            <person name="Vaysberg M."/>
            <person name="Vysotskaia V.S."/>
            <person name="Walker M."/>
            <person name="Wu D."/>
            <person name="Yu G."/>
            <person name="Fraser C.M."/>
            <person name="Venter J.C."/>
            <person name="Davis R.W."/>
        </authorList>
    </citation>
    <scope>NUCLEOTIDE SEQUENCE [LARGE SCALE GENOMIC DNA]</scope>
    <source>
        <strain>cv. Columbia</strain>
    </source>
</reference>
<reference key="3">
    <citation type="journal article" date="2017" name="Plant J.">
        <title>Araport11: a complete reannotation of the Arabidopsis thaliana reference genome.</title>
        <authorList>
            <person name="Cheng C.Y."/>
            <person name="Krishnakumar V."/>
            <person name="Chan A.P."/>
            <person name="Thibaud-Nissen F."/>
            <person name="Schobel S."/>
            <person name="Town C.D."/>
        </authorList>
    </citation>
    <scope>GENOME REANNOTATION</scope>
    <source>
        <strain>cv. Columbia</strain>
    </source>
</reference>
<reference key="4">
    <citation type="journal article" date="2003" name="Science">
        <title>Empirical analysis of transcriptional activity in the Arabidopsis genome.</title>
        <authorList>
            <person name="Yamada K."/>
            <person name="Lim J."/>
            <person name="Dale J.M."/>
            <person name="Chen H."/>
            <person name="Shinn P."/>
            <person name="Palm C.J."/>
            <person name="Southwick A.M."/>
            <person name="Wu H.C."/>
            <person name="Kim C.J."/>
            <person name="Nguyen M."/>
            <person name="Pham P.K."/>
            <person name="Cheuk R.F."/>
            <person name="Karlin-Newmann G."/>
            <person name="Liu S.X."/>
            <person name="Lam B."/>
            <person name="Sakano H."/>
            <person name="Wu T."/>
            <person name="Yu G."/>
            <person name="Miranda M."/>
            <person name="Quach H.L."/>
            <person name="Tripp M."/>
            <person name="Chang C.H."/>
            <person name="Lee J.M."/>
            <person name="Toriumi M.J."/>
            <person name="Chan M.M."/>
            <person name="Tang C.C."/>
            <person name="Onodera C.S."/>
            <person name="Deng J.M."/>
            <person name="Akiyama K."/>
            <person name="Ansari Y."/>
            <person name="Arakawa T."/>
            <person name="Banh J."/>
            <person name="Banno F."/>
            <person name="Bowser L."/>
            <person name="Brooks S.Y."/>
            <person name="Carninci P."/>
            <person name="Chao Q."/>
            <person name="Choy N."/>
            <person name="Enju A."/>
            <person name="Goldsmith A.D."/>
            <person name="Gurjal M."/>
            <person name="Hansen N.F."/>
            <person name="Hayashizaki Y."/>
            <person name="Johnson-Hopson C."/>
            <person name="Hsuan V.W."/>
            <person name="Iida K."/>
            <person name="Karnes M."/>
            <person name="Khan S."/>
            <person name="Koesema E."/>
            <person name="Ishida J."/>
            <person name="Jiang P.X."/>
            <person name="Jones T."/>
            <person name="Kawai J."/>
            <person name="Kamiya A."/>
            <person name="Meyers C."/>
            <person name="Nakajima M."/>
            <person name="Narusaka M."/>
            <person name="Seki M."/>
            <person name="Sakurai T."/>
            <person name="Satou M."/>
            <person name="Tamse R."/>
            <person name="Vaysberg M."/>
            <person name="Wallender E.K."/>
            <person name="Wong C."/>
            <person name="Yamamura Y."/>
            <person name="Yuan S."/>
            <person name="Shinozaki K."/>
            <person name="Davis R.W."/>
            <person name="Theologis A."/>
            <person name="Ecker J.R."/>
        </authorList>
    </citation>
    <scope>NUCLEOTIDE SEQUENCE [LARGE SCALE MRNA] OF 389-942</scope>
    <source>
        <strain>cv. Columbia</strain>
    </source>
</reference>
<reference key="5">
    <citation type="journal article" date="2001" name="Trends Plant Sci.">
        <title>An unexpected plethora of trehalose biosynthesis genes in Arabidopsis thaliana.</title>
        <authorList>
            <person name="Leyman B."/>
            <person name="Van Dijck P."/>
            <person name="Thevelein J.M."/>
        </authorList>
    </citation>
    <scope>GENE FAMILY</scope>
    <scope>NOMENCLATURE</scope>
</reference>
<reference key="6">
    <citation type="journal article" date="2001" name="J. Exp. Bot.">
        <title>Trehalose metabolism in Arabidopsis: occurrence of trehalose and molecular cloning and characterization of trehalose-6-phosphate synthase homologues.</title>
        <authorList>
            <person name="Vogel G."/>
            <person name="Fiehn O."/>
            <person name="Jean-Richard-dit-Bressel L."/>
            <person name="Boller T."/>
            <person name="Wiemken A."/>
            <person name="Aeschbacher R.A."/>
            <person name="Wingler A."/>
        </authorList>
    </citation>
    <scope>FUNCTION</scope>
    <scope>CATALYTIC ACTIVITY</scope>
    <scope>TISSUE SPECIFICITY</scope>
    <scope>INDUCTION</scope>
    <source>
        <strain>cv. Landsberg erecta</strain>
    </source>
</reference>
<reference key="7">
    <citation type="journal article" date="2002" name="Biochem. J.">
        <title>Truncation of Arabidopsis thaliana and Selaginella lepidophylla trehalose-6-phosphate synthase unlocks high catalytic activity and supports high trehalose levels on expression in yeast.</title>
        <authorList>
            <person name="Van Dijck P."/>
            <person name="Mascorro-Gallardo J.O."/>
            <person name="De Bus M."/>
            <person name="Royackers K."/>
            <person name="Iturriaga G."/>
            <person name="Thevelein J.M."/>
        </authorList>
    </citation>
    <scope>FUNCTION</scope>
    <scope>MUTAGENESIS OF ARG-17 AND LEU-27</scope>
</reference>
<reference key="8">
    <citation type="journal article" date="2002" name="Plant J.">
        <title>Trehalose-6-phosphate synthase 1, which catalyses the first step in trehalose synthesis, is essential for Arabidopsis embryo maturation.</title>
        <authorList>
            <person name="Eastmond P.J."/>
            <person name="van Dijken A.J.H."/>
            <person name="Spielman M."/>
            <person name="Kerr A."/>
            <person name="Tissier A.F."/>
            <person name="Dickinson H.G."/>
            <person name="Jones J.D.G."/>
            <person name="Smeekens S.C."/>
            <person name="Graham I.A."/>
        </authorList>
    </citation>
    <scope>FUNCTION</scope>
    <scope>TISSUE SPECIFICITY</scope>
    <scope>DISRUPTION PHENOTYPE</scope>
    <scope>DEVELOPMENTAL STAGE</scope>
</reference>
<reference key="9">
    <citation type="journal article" date="2003" name="Proc. Natl. Acad. Sci. U.S.A.">
        <title>Trehalose 6-phosphate is indispensable for carbohydrate utilization and growth in Arabidopsis thaliana.</title>
        <authorList>
            <person name="Schluepmann H."/>
            <person name="Pellny T."/>
            <person name="van Dijken A.J.H."/>
            <person name="Smeekens S.C.M."/>
            <person name="Paul M."/>
        </authorList>
    </citation>
    <scope>FUNCTION</scope>
</reference>
<reference key="10">
    <citation type="journal article" date="2004" name="Plant Physiol.">
        <title>Trehalose mediated growth inhibition of Arabidopsis seedlings is due to trehalose-6-phosphate accumulation.</title>
        <authorList>
            <person name="Schluepmann H."/>
            <person name="van Dijken A.J.H."/>
            <person name="Aghdasi M."/>
            <person name="Wobbes B."/>
            <person name="Paul M."/>
            <person name="Smeekens S.C.M."/>
        </authorList>
    </citation>
    <scope>INDUCTION BY SUCROSE</scope>
</reference>
<reference key="11">
    <citation type="journal article" date="2004" name="Plant Physiol.">
        <title>Arabidopsis trehalose-6-phosphate synthase 1 is essential for normal vegetative growth and transition to flowering.</title>
        <authorList>
            <person name="van Dijken A.J.H."/>
            <person name="Schluepmann H."/>
            <person name="Smeekens S.C.M."/>
        </authorList>
    </citation>
    <scope>FUNCTION</scope>
    <scope>DISRUPTION PHENOTYPE</scope>
</reference>
<reference key="12">
    <citation type="journal article" date="2005" name="Biochem. Soc. Trans.">
        <title>Trehalose metabolism and glucose sensing in plants.</title>
        <authorList>
            <person name="Avonce N."/>
            <person name="Leyman B."/>
            <person name="Thevelein J."/>
            <person name="Iturriaga G."/>
        </authorList>
    </citation>
    <scope>FUNCTION</scope>
</reference>
<reference key="13">
    <citation type="journal article" date="2005" name="Biochem. Soc. Trans.">
        <title>The role of trehalose-6-phosphate synthase in Arabidopsis embryo development.</title>
        <authorList>
            <person name="Gomez L.D."/>
            <person name="Baud S."/>
            <person name="Graham I.A."/>
        </authorList>
    </citation>
    <scope>FUNCTION</scope>
    <scope>DISRUPTION PHENOTYPE</scope>
</reference>
<reference key="14">
    <citation type="journal article" date="2006" name="Plant J.">
        <title>Delayed embryo development in the ARABIDOPSIS TREHALOSE-6-PHOSPHATE SYNTHASE 1 mutant is associated with altered cell wall structure, decreased cell division and starch accumulation.</title>
        <authorList>
            <person name="Gomez L.D."/>
            <person name="Baud S."/>
            <person name="Gilday A."/>
            <person name="Li Y."/>
            <person name="Graham I.A."/>
        </authorList>
    </citation>
    <scope>FUNCTION</scope>
    <scope>DISRUPTION PHENOTYPE</scope>
</reference>
<reference key="15">
    <citation type="journal article" date="2007" name="Protoplasma">
        <title>Immunogold localization of trehalose-6-phosphate synthase in leaf segments of wild-type and transgenic tobacco plants expressing the AtTPS1 gene from Arabidopsis thaliana.</title>
        <authorList>
            <person name="Almeida A.M."/>
            <person name="Santos M."/>
            <person name="Villalobos E."/>
            <person name="Araujo S.S."/>
            <person name="van Dijck P."/>
            <person name="Leyman B."/>
            <person name="Cardoso L.A."/>
            <person name="Santos D."/>
            <person name="Fevereiro P.S."/>
            <person name="Torne J.M."/>
        </authorList>
    </citation>
    <scope>SUBCELLULAR LOCATION</scope>
</reference>
<comment type="function">
    <text evidence="2 3 4 5 6 8 9 10 12">Required for normal embryo development, vegetative growth and transition to flowering. Regulates embryo growth, cell wall deposition, starch and sucrose degradation, but not cell differentiation. Involved in the regulation of glucose sensing and signaling genes during plant development.</text>
</comment>
<comment type="catalytic activity">
    <reaction evidence="2">
        <text>D-glucose 6-phosphate + UDP-alpha-D-glucose = alpha,alpha-trehalose 6-phosphate + UDP + H(+)</text>
        <dbReference type="Rhea" id="RHEA:18889"/>
        <dbReference type="ChEBI" id="CHEBI:15378"/>
        <dbReference type="ChEBI" id="CHEBI:58223"/>
        <dbReference type="ChEBI" id="CHEBI:58429"/>
        <dbReference type="ChEBI" id="CHEBI:58885"/>
        <dbReference type="ChEBI" id="CHEBI:61548"/>
        <dbReference type="EC" id="2.4.1.15"/>
    </reaction>
    <physiologicalReaction direction="left-to-right" evidence="2">
        <dbReference type="Rhea" id="RHEA:18890"/>
    </physiologicalReaction>
</comment>
<comment type="subcellular location">
    <subcellularLocation>
        <location evidence="11">Vacuole</location>
    </subcellularLocation>
    <subcellularLocation>
        <location evidence="11">Secreted</location>
        <location evidence="11">Cell wall</location>
    </subcellularLocation>
    <subcellularLocation>
        <location evidence="11">Cytoplasm</location>
    </subcellularLocation>
    <text>Determined in transgenic tobacco plants expressing TPS1.</text>
</comment>
<comment type="tissue specificity">
    <text evidence="2 3 12">Expressed in seedlings, leaves, roots, stems, flowers and siliques.</text>
</comment>
<comment type="developmental stage">
    <text evidence="3">Up-regulated during seed development.</text>
</comment>
<comment type="induction">
    <text evidence="2 7">Low induction by sucrose after 24 hours. Down-regulated by dark incubation.</text>
</comment>
<comment type="domain">
    <text>The N-terminal part (1-88) has an inhibitory function on the enzymatic activity.</text>
</comment>
<comment type="disruption phenotype">
    <text evidence="3 6 9 10">Embryonic lethality.</text>
</comment>
<comment type="similarity">
    <text evidence="14">In the N-terminal section; belongs to the glycosyltransferase 20 family.</text>
</comment>
<comment type="similarity">
    <text evidence="14">In the C-terminal section; belongs to the trehalose phosphatase family.</text>
</comment>
<keyword id="KW-0134">Cell wall</keyword>
<keyword id="KW-0963">Cytoplasm</keyword>
<keyword id="KW-0328">Glycosyltransferase</keyword>
<keyword id="KW-1185">Reference proteome</keyword>
<keyword id="KW-0964">Secreted</keyword>
<keyword id="KW-0808">Transferase</keyword>
<keyword id="KW-0926">Vacuole</keyword>
<feature type="chain" id="PRO_0000324822" description="Alpha,alpha-trehalose-phosphate synthase [UDP-forming] 1">
    <location>
        <begin position="1"/>
        <end position="942"/>
    </location>
</feature>
<feature type="region of interest" description="Disordered" evidence="1">
    <location>
        <begin position="28"/>
        <end position="57"/>
    </location>
</feature>
<feature type="region of interest" description="Glycosyltransferase">
    <location>
        <begin position="92"/>
        <end position="559"/>
    </location>
</feature>
<feature type="region of interest" description="Disordered" evidence="1">
    <location>
        <begin position="815"/>
        <end position="892"/>
    </location>
</feature>
<feature type="compositionally biased region" description="Low complexity" evidence="1">
    <location>
        <begin position="821"/>
        <end position="833"/>
    </location>
</feature>
<feature type="compositionally biased region" description="Low complexity" evidence="1">
    <location>
        <begin position="841"/>
        <end position="867"/>
    </location>
</feature>
<feature type="compositionally biased region" description="Polar residues" evidence="1">
    <location>
        <begin position="879"/>
        <end position="888"/>
    </location>
</feature>
<feature type="mutagenesis site" description="3-fold increase in activity." evidence="4">
    <original>R</original>
    <variation>Q</variation>
    <location>
        <position position="17"/>
    </location>
</feature>
<feature type="mutagenesis site" description="4-fold increase in activity." evidence="4">
    <original>L</original>
    <variation>P</variation>
    <location>
        <position position="27"/>
    </location>
</feature>
<feature type="sequence conflict" description="In Ref. 1; CAA69879." evidence="14" ref="1">
    <original>A</original>
    <variation>P</variation>
    <location>
        <position position="105"/>
    </location>
</feature>
<feature type="sequence conflict" description="In Ref. 1; CAA69879." evidence="14" ref="1">
    <original>I</original>
    <variation>K</variation>
    <location>
        <position position="348"/>
    </location>
</feature>
<feature type="sequence conflict" description="In Ref. 1; CAA69879." evidence="14" ref="1">
    <original>AG</original>
    <variation>TD</variation>
    <location>
        <begin position="359"/>
        <end position="360"/>
    </location>
</feature>
<feature type="sequence conflict" description="In Ref. 1; CAA69879." evidence="14" ref="1">
    <original>Q</original>
    <variation>K</variation>
    <location>
        <position position="401"/>
    </location>
</feature>
<feature type="sequence conflict" description="In Ref. 1; CAA69879." evidence="14" ref="1">
    <original>T</original>
    <variation>P</variation>
    <location>
        <position position="408"/>
    </location>
</feature>
<feature type="sequence conflict" description="In Ref. 1; CAA69879." evidence="14" ref="1">
    <original>K</original>
    <variation>T</variation>
    <location>
        <position position="415"/>
    </location>
</feature>
<feature type="sequence conflict" description="In Ref. 1; CAA69879." evidence="14" ref="1">
    <original>N</original>
    <variation>I</variation>
    <location>
        <position position="428"/>
    </location>
</feature>
<feature type="sequence conflict" description="In Ref. 1; CAA69879." evidence="14" ref="1">
    <original>F</original>
    <variation>L</variation>
    <location>
        <position position="431"/>
    </location>
</feature>
<proteinExistence type="evidence at protein level"/>
<name>TPS1_ARATH</name>
<organism>
    <name type="scientific">Arabidopsis thaliana</name>
    <name type="common">Mouse-ear cress</name>
    <dbReference type="NCBI Taxonomy" id="3702"/>
    <lineage>
        <taxon>Eukaryota</taxon>
        <taxon>Viridiplantae</taxon>
        <taxon>Streptophyta</taxon>
        <taxon>Embryophyta</taxon>
        <taxon>Tracheophyta</taxon>
        <taxon>Spermatophyta</taxon>
        <taxon>Magnoliopsida</taxon>
        <taxon>eudicotyledons</taxon>
        <taxon>Gunneridae</taxon>
        <taxon>Pentapetalae</taxon>
        <taxon>rosids</taxon>
        <taxon>malvids</taxon>
        <taxon>Brassicales</taxon>
        <taxon>Brassicaceae</taxon>
        <taxon>Camelineae</taxon>
        <taxon>Arabidopsis</taxon>
    </lineage>
</organism>